<name>COPP_HELPJ</name>
<proteinExistence type="predicted"/>
<keyword id="KW-0186">Copper</keyword>
<keyword id="KW-0479">Metal-binding</keyword>
<gene>
    <name type="primary">copP</name>
    <name type="ordered locus">jhp_0352</name>
</gene>
<evidence type="ECO:0000255" key="1">
    <source>
        <dbReference type="PROSITE-ProRule" id="PRU00280"/>
    </source>
</evidence>
<reference key="1">
    <citation type="journal article" date="1999" name="Nature">
        <title>Genomic sequence comparison of two unrelated isolates of the human gastric pathogen Helicobacter pylori.</title>
        <authorList>
            <person name="Alm R.A."/>
            <person name="Ling L.-S.L."/>
            <person name="Moir D.T."/>
            <person name="King B.L."/>
            <person name="Brown E.D."/>
            <person name="Doig P.C."/>
            <person name="Smith D.R."/>
            <person name="Noonan B."/>
            <person name="Guild B.C."/>
            <person name="deJonge B.L."/>
            <person name="Carmel G."/>
            <person name="Tummino P.J."/>
            <person name="Caruso A."/>
            <person name="Uria-Nickelsen M."/>
            <person name="Mills D.M."/>
            <person name="Ives C."/>
            <person name="Gibson R."/>
            <person name="Merberg D."/>
            <person name="Mills S.D."/>
            <person name="Jiang Q."/>
            <person name="Taylor D.E."/>
            <person name="Vovis G.F."/>
            <person name="Trust T.J."/>
        </authorList>
    </citation>
    <scope>NUCLEOTIDE SEQUENCE [LARGE SCALE GENOMIC DNA]</scope>
    <source>
        <strain>J99 / ATCC 700824</strain>
    </source>
</reference>
<dbReference type="EMBL" id="AE001439">
    <property type="protein sequence ID" value="AAD05936.1"/>
    <property type="molecule type" value="Genomic_DNA"/>
</dbReference>
<dbReference type="PIR" id="H71940">
    <property type="entry name" value="H71940"/>
</dbReference>
<dbReference type="RefSeq" id="WP_000869072.1">
    <property type="nucleotide sequence ID" value="NC_000921.1"/>
</dbReference>
<dbReference type="SMR" id="Q9ZM70"/>
<dbReference type="KEGG" id="hpj:jhp_0352"/>
<dbReference type="PATRIC" id="fig|85963.30.peg.659"/>
<dbReference type="eggNOG" id="COG2608">
    <property type="taxonomic scope" value="Bacteria"/>
</dbReference>
<dbReference type="Proteomes" id="UP000000804">
    <property type="component" value="Chromosome"/>
</dbReference>
<dbReference type="GO" id="GO:0005507">
    <property type="term" value="F:copper ion binding"/>
    <property type="evidence" value="ECO:0007669"/>
    <property type="project" value="InterPro"/>
</dbReference>
<dbReference type="GO" id="GO:0006825">
    <property type="term" value="P:copper ion transport"/>
    <property type="evidence" value="ECO:0007669"/>
    <property type="project" value="InterPro"/>
</dbReference>
<dbReference type="CDD" id="cd00371">
    <property type="entry name" value="HMA"/>
    <property type="match status" value="1"/>
</dbReference>
<dbReference type="Gene3D" id="3.30.70.100">
    <property type="match status" value="1"/>
</dbReference>
<dbReference type="InterPro" id="IPR000428">
    <property type="entry name" value="Cu-bd"/>
</dbReference>
<dbReference type="InterPro" id="IPR017969">
    <property type="entry name" value="Heavy-metal-associated_CS"/>
</dbReference>
<dbReference type="InterPro" id="IPR006122">
    <property type="entry name" value="HMA_Cu_ion-bd"/>
</dbReference>
<dbReference type="InterPro" id="IPR006121">
    <property type="entry name" value="HMA_dom"/>
</dbReference>
<dbReference type="InterPro" id="IPR036163">
    <property type="entry name" value="HMA_dom_sf"/>
</dbReference>
<dbReference type="NCBIfam" id="NF033781">
    <property type="entry name" value="chaper_CopP"/>
    <property type="match status" value="1"/>
</dbReference>
<dbReference type="NCBIfam" id="TIGR00003">
    <property type="entry name" value="copper ion binding protein"/>
    <property type="match status" value="1"/>
</dbReference>
<dbReference type="Pfam" id="PF00403">
    <property type="entry name" value="HMA"/>
    <property type="match status" value="1"/>
</dbReference>
<dbReference type="PRINTS" id="PR00944">
    <property type="entry name" value="CUEXPORT"/>
</dbReference>
<dbReference type="SUPFAM" id="SSF55008">
    <property type="entry name" value="HMA, heavy metal-associated domain"/>
    <property type="match status" value="1"/>
</dbReference>
<dbReference type="PROSITE" id="PS01047">
    <property type="entry name" value="HMA_1"/>
    <property type="match status" value="1"/>
</dbReference>
<dbReference type="PROSITE" id="PS50846">
    <property type="entry name" value="HMA_2"/>
    <property type="match status" value="1"/>
</dbReference>
<accession>Q9ZM70</accession>
<feature type="chain" id="PRO_0000079245" description="COP-associated protein">
    <location>
        <begin position="1"/>
        <end position="66"/>
    </location>
</feature>
<feature type="domain" description="HMA" evidence="1">
    <location>
        <begin position="1"/>
        <end position="66"/>
    </location>
</feature>
<feature type="binding site" evidence="1">
    <location>
        <position position="12"/>
    </location>
    <ligand>
        <name>Cu cation</name>
        <dbReference type="ChEBI" id="CHEBI:23378"/>
    </ligand>
</feature>
<feature type="binding site" evidence="1">
    <location>
        <position position="15"/>
    </location>
    <ligand>
        <name>Cu cation</name>
        <dbReference type="ChEBI" id="CHEBI:23378"/>
    </ligand>
</feature>
<comment type="function">
    <text>Part of a cation-transporting system which is associated with copper export out of the H.pylori cells.</text>
</comment>
<protein>
    <recommendedName>
        <fullName>COP-associated protein</fullName>
    </recommendedName>
    <alternativeName>
        <fullName>Copper ion-binding protein</fullName>
    </alternativeName>
</protein>
<sequence length="66" mass="7226">MKVTFQVPSITCNHCVDKIEKFVGEIEGVSFIDASVEKKSVVVEFDTPATQDLIKEALLDAGQEVV</sequence>
<organism>
    <name type="scientific">Helicobacter pylori (strain J99 / ATCC 700824)</name>
    <name type="common">Campylobacter pylori J99</name>
    <dbReference type="NCBI Taxonomy" id="85963"/>
    <lineage>
        <taxon>Bacteria</taxon>
        <taxon>Pseudomonadati</taxon>
        <taxon>Campylobacterota</taxon>
        <taxon>Epsilonproteobacteria</taxon>
        <taxon>Campylobacterales</taxon>
        <taxon>Helicobacteraceae</taxon>
        <taxon>Helicobacter</taxon>
    </lineage>
</organism>